<feature type="chain" id="PRO_0000444966" description="O-methyltransferase CTB2">
    <location>
        <begin position="1"/>
        <end position="461"/>
    </location>
</feature>
<feature type="active site" description="Proton acceptor" evidence="2">
    <location>
        <position position="339"/>
    </location>
</feature>
<feature type="binding site" evidence="2">
    <location>
        <position position="288"/>
    </location>
    <ligand>
        <name>S-adenosyl-L-methionine</name>
        <dbReference type="ChEBI" id="CHEBI:59789"/>
    </ligand>
</feature>
<protein>
    <recommendedName>
        <fullName evidence="11">O-methyltransferase CTB2</fullName>
        <ecNumber evidence="13 14">2.1.1.-</ecNumber>
    </recommendedName>
    <alternativeName>
        <fullName evidence="11">Cercosporin toxin biosynthesis cluster protein 2</fullName>
    </alternativeName>
</protein>
<dbReference type="EC" id="2.1.1.-" evidence="13 14"/>
<dbReference type="EMBL" id="DQ991505">
    <property type="protein sequence ID" value="ABK64180.1"/>
    <property type="molecule type" value="Genomic_DNA"/>
</dbReference>
<dbReference type="SMR" id="A0ST41"/>
<dbReference type="PHI-base" id="PHI:1049"/>
<dbReference type="GO" id="GO:0008171">
    <property type="term" value="F:O-methyltransferase activity"/>
    <property type="evidence" value="ECO:0007669"/>
    <property type="project" value="InterPro"/>
</dbReference>
<dbReference type="GO" id="GO:0032259">
    <property type="term" value="P:methylation"/>
    <property type="evidence" value="ECO:0007669"/>
    <property type="project" value="UniProtKB-KW"/>
</dbReference>
<dbReference type="GO" id="GO:0044550">
    <property type="term" value="P:secondary metabolite biosynthetic process"/>
    <property type="evidence" value="ECO:0007669"/>
    <property type="project" value="UniProtKB-ARBA"/>
</dbReference>
<dbReference type="Gene3D" id="3.40.50.150">
    <property type="entry name" value="Vaccinia Virus protein VP39"/>
    <property type="match status" value="1"/>
</dbReference>
<dbReference type="InterPro" id="IPR016461">
    <property type="entry name" value="COMT-like"/>
</dbReference>
<dbReference type="InterPro" id="IPR001077">
    <property type="entry name" value="O_MeTrfase_dom"/>
</dbReference>
<dbReference type="InterPro" id="IPR029063">
    <property type="entry name" value="SAM-dependent_MTases_sf"/>
</dbReference>
<dbReference type="PANTHER" id="PTHR43712:SF16">
    <property type="entry name" value="O-METHYLTRANSFERASE ELCB"/>
    <property type="match status" value="1"/>
</dbReference>
<dbReference type="PANTHER" id="PTHR43712">
    <property type="entry name" value="PUTATIVE (AFU_ORTHOLOGUE AFUA_4G14580)-RELATED"/>
    <property type="match status" value="1"/>
</dbReference>
<dbReference type="Pfam" id="PF00891">
    <property type="entry name" value="Methyltransf_2"/>
    <property type="match status" value="1"/>
</dbReference>
<dbReference type="SUPFAM" id="SSF53335">
    <property type="entry name" value="S-adenosyl-L-methionine-dependent methyltransferases"/>
    <property type="match status" value="1"/>
</dbReference>
<dbReference type="PROSITE" id="PS51683">
    <property type="entry name" value="SAM_OMT_II"/>
    <property type="match status" value="1"/>
</dbReference>
<proteinExistence type="evidence at transcript level"/>
<sequence length="461" mass="50547">MVKRIEADNLFELTAELVSASSKLHKFLDQKNLPQPSFDAPAPSVALNSANKPYYDARSAIVEAAEQLIRLVRGPRDTLLALSFEHCATASMQVVFKYKFANHIPLHGSTTYSKIAEAVGDGVTTALVERTIQHCASFGLFETIPGAMLLQCYLVLLVTDPDLEAWMYLSAVIAYPAGAAIPKAVEQYGVSHEADESGYGASIGRKIAQFQRFREPDGKKDHEMFARAMRGIAAGGAYDFRHAVDGGYPWHLLAEGAGHLVVDVGGGPGHVAMALAEKYPSLRFQVQDLPETVQVGAKNCPEHLKSRVSFQSHDFFTSQPAHEVQDGEGIVYFARFILHDWSDKYATKIVQQLATGLRPQDRIILNEVVVPEAGQVGRETERRMHDRDLLMLMNLNGRERTQSAFEAIFASVTPKLRLQRVIHPEQGELSLIEVTLDGVELPAQANGVNGHANGTNGVNGH</sequence>
<keyword id="KW-0489">Methyltransferase</keyword>
<keyword id="KW-0949">S-adenosyl-L-methionine</keyword>
<keyword id="KW-0808">Transferase</keyword>
<reference key="1">
    <citation type="journal article" date="2007" name="Mol. Microbiol.">
        <title>Molecular analysis of the cercosporin biosynthetic gene cluster in Cercospora nicotianae.</title>
        <authorList>
            <person name="Chen H."/>
            <person name="Lee M.H."/>
            <person name="Daub M.E."/>
            <person name="Chung K.R."/>
        </authorList>
    </citation>
    <scope>NUCLEOTIDE SEQUENCE [GENOMIC DNA]</scope>
    <scope>FUNCTION</scope>
    <scope>INDUCTION</scope>
    <scope>DISRUPTION PHENOTYPE</scope>
    <scope>PATHWAY</scope>
</reference>
<reference key="2">
    <citation type="journal article" date="2000" name="Annu. Rev. Phytopathol.">
        <title>The photoactivated cercospora toxin cercosporin: contributions to plant disease and fundamental biology.</title>
        <authorList>
            <person name="Daub M.E."/>
            <person name="Ehrenshaft M."/>
        </authorList>
    </citation>
    <scope>REVIEW ON CERCOSPORIN</scope>
</reference>
<reference key="3">
    <citation type="journal article" date="2005" name="Mol. Plant Microbe Interact.">
        <title>The CTB1 gene encoding a fungal polyketide synthase is required for cercosporin biosynthesis and fungal virulence of Cercospora nicotianae.</title>
        <authorList>
            <person name="Choquer M."/>
            <person name="Dekkers K.L."/>
            <person name="Chen H.Q."/>
            <person name="Cao L."/>
            <person name="Ueng P.P."/>
            <person name="Daub M.E."/>
            <person name="Chung K.R."/>
        </authorList>
    </citation>
    <scope>FUNCTION</scope>
</reference>
<reference key="4">
    <citation type="journal article" date="2007" name="Fungal Genet. Biol.">
        <title>The Cercospora nicotianae gene encoding dual O-methyltransferase and FAD-dependent monooxygenase domains mediates cercosporin toxin biosynthesis.</title>
        <authorList>
            <person name="Dekkers K.L."/>
            <person name="You B.J."/>
            <person name="Gowda V.S."/>
            <person name="Liao H.L."/>
            <person name="Lee M.H."/>
            <person name="Bau H.J."/>
            <person name="Ueng P.P."/>
            <person name="Chung K.R."/>
        </authorList>
    </citation>
    <scope>FUNCTION</scope>
</reference>
<reference key="5">
    <citation type="journal article" date="2007" name="Microbiology (Mosc.)">
        <title>Functional characterization of three genes encoding putative oxidoreductases required for cercosporin toxin biosynthesis in the fungus Cercospora nicotianae.</title>
        <authorList>
            <person name="Chen H.Q."/>
            <person name="Lee M.H."/>
            <person name="Chung K.R."/>
        </authorList>
    </citation>
    <scope>FUNCTION</scope>
</reference>
<reference key="6">
    <citation type="journal article" date="2012" name="Chem. Commun. (Camb.)">
        <title>Analysis of the cercosporin polyketide synthase CTB1 reveals a new fungal thioesterase function.</title>
        <authorList>
            <person name="Newman A.G."/>
            <person name="Vagstad A.L."/>
            <person name="Belecki K."/>
            <person name="Scheerer J.R."/>
            <person name="Townsend C.A."/>
        </authorList>
    </citation>
    <scope>FUNCTION</scope>
</reference>
<reference key="7">
    <citation type="journal article" date="2016" name="J. Am. Chem. Soc.">
        <title>Molecular characterization of the cercosporin biosynthetic pathway in the fungal plant pathogen Cercospora nicotianae.</title>
        <authorList>
            <person name="Newman A.G."/>
            <person name="Townsend C.A."/>
        </authorList>
    </citation>
    <scope>FUNCTION</scope>
    <scope>DISRUPTION PHENOTYPE</scope>
    <scope>PATHWAY</scope>
</reference>
<reference key="8">
    <citation type="journal article" date="2019" name="Chem. Sci.">
        <title>Heterologous biosynthesis of elsinochrome A sheds light on the formation of the photosensitive perylenequinone system.</title>
        <authorList>
            <person name="Hu J."/>
            <person name="Sarrami F."/>
            <person name="Li H."/>
            <person name="Zhang G."/>
            <person name="Stubbs K.A."/>
            <person name="Lacey E."/>
            <person name="Stewart S.G."/>
            <person name="Karton A."/>
            <person name="Piggott A.M."/>
            <person name="Chooi Y.H."/>
        </authorList>
    </citation>
    <scope>FUNCTION</scope>
</reference>
<evidence type="ECO:0000250" key="1">
    <source>
        <dbReference type="UniProtKB" id="Q0UHZ9"/>
    </source>
</evidence>
<evidence type="ECO:0000255" key="2">
    <source>
        <dbReference type="PROSITE-ProRule" id="PRU01020"/>
    </source>
</evidence>
<evidence type="ECO:0000269" key="3">
    <source>
    </source>
</evidence>
<evidence type="ECO:0000269" key="4">
    <source>
    </source>
</evidence>
<evidence type="ECO:0000269" key="5">
    <source>
    </source>
</evidence>
<evidence type="ECO:0000269" key="6">
    <source>
    </source>
</evidence>
<evidence type="ECO:0000269" key="7">
    <source>
    </source>
</evidence>
<evidence type="ECO:0000269" key="8">
    <source>
    </source>
</evidence>
<evidence type="ECO:0000269" key="9">
    <source>
    </source>
</evidence>
<evidence type="ECO:0000303" key="10">
    <source>
    </source>
</evidence>
<evidence type="ECO:0000303" key="11">
    <source>
    </source>
</evidence>
<evidence type="ECO:0000305" key="12"/>
<evidence type="ECO:0000305" key="13">
    <source>
    </source>
</evidence>
<evidence type="ECO:0000305" key="14">
    <source>
    </source>
</evidence>
<comment type="function">
    <text evidence="1 3 4 6 7 8 9 10">O-methyltransferase; part of the gene cluster that mediates the biosynthesis of cercosporin, a light-activated, non-host-selective toxin (PubMed:15915645, PubMed:17074519, PubMed:26938470). The perylenequinone chromophore of cercosporin absorbs light energy to attain an electronically-activated triplet state and produces active oxygen species such as the hydroxyl radical, superoxide, hydrogen peroxide or singlet oxygen upon reaction with oxygen molecules (PubMed:11701851). These reactive oxygen species cause damage to various cellular components including lipids, proteins and nucleic acids (PubMed:11701851). The first step of cercosporin biosynthesis is performed by the polyketide synthase CTB1 which catalyzes the formation of nor-toralactone (PubMed:23108075, PubMed:26938470). The starter unit acyltransferase (SAT) domain of CTB1 initiates polyketide extension by the selective utilization of acetyl-CoA, which is elongated to the heptaketide in the beta-ketoacyl synthase (KS) domain by successive condensations with six malonyl units introduced by the malonyl acyltransferase (MAT) domain. The product template (PT) domain catalyzes C4-C9 and C2-C11 aldol cyclizations and dehydrations to a trihydroxynaphthalene, which is thought to be delivered to the thioesterase (TE) domain for product release (PubMed:23108075). The bifunctional enzyme CTB3 then methylates nor-toralactone to toralactone before conducting an unusual oxidative aromatic ring opening (PubMed:17074519, PubMed:26938470). The O-methyltransferase CTB2 further methylates the nascent OH-6 of the CBT3 product, blocking further oxidation at this site before the reductase CTB6 reduces the 2-oxopropyl ketone at position C7, giving naphthalene (PubMed:17660442, PubMed:26938470). The FAD-dependent monooxygenase CTB5 in concert with the multicopper oxidase CTB12 are responsible for homodimerization of naphthalene with CTB7 installing the dioxepine moiety, finally producing cercosporin (PubMed:17660442, PubMed:26938470, PubMed:30809363). The fasciclin domain-containing protein CTB11 might act with CTB5 and CTB12 whereas the roles of CTB9 and CTB10 have still to be elucidated (By similarity).</text>
</comment>
<comment type="pathway">
    <text evidence="5 8">Mycotoxin biosynthesis.</text>
</comment>
<comment type="induction">
    <text evidence="5">Expression is positively regulated by the cercosporin cluster-specific transcription factor CTB8 (PubMed:17462021). Expression is also affected by nitrogen and carbon sources and pH, and is also controlled by another transcription activator, CRG1, previously shown to regulate cercosporin production and resistance (PubMed:17462021).</text>
</comment>
<comment type="disruption phenotype">
    <text evidence="5 8">Abolishes the production of cercosporin (PubMed:17462021, PubMed:26938470). Leads to yellow-brown mycelia with significant export of colored compounds into the agar (PubMed:26938470).</text>
</comment>
<comment type="similarity">
    <text evidence="12">Belongs to the class I-like SAM-binding methyltransferase superfamily. Cation-independent O-methyltransferase family. COMT subfamily.</text>
</comment>
<accession>A0ST41</accession>
<gene>
    <name evidence="11" type="primary">CTB2</name>
</gene>
<name>CTB2_CERNC</name>
<organism>
    <name type="scientific">Cercospora nicotianae</name>
    <name type="common">Barn spot disease fungus</name>
    <dbReference type="NCBI Taxonomy" id="29003"/>
    <lineage>
        <taxon>Eukaryota</taxon>
        <taxon>Fungi</taxon>
        <taxon>Dikarya</taxon>
        <taxon>Ascomycota</taxon>
        <taxon>Pezizomycotina</taxon>
        <taxon>Dothideomycetes</taxon>
        <taxon>Dothideomycetidae</taxon>
        <taxon>Mycosphaerellales</taxon>
        <taxon>Mycosphaerellaceae</taxon>
        <taxon>Cercospora</taxon>
    </lineage>
</organism>